<feature type="propeptide" id="PRO_0000431200" evidence="1">
    <location>
        <begin position="1"/>
        <end position="14"/>
    </location>
</feature>
<feature type="chain" id="PRO_0000361481" description="Photosystem II CP43 reaction center protein" evidence="1">
    <location>
        <begin position="15"/>
        <end position="473"/>
    </location>
</feature>
<feature type="transmembrane region" description="Helical" evidence="1">
    <location>
        <begin position="69"/>
        <end position="93"/>
    </location>
</feature>
<feature type="transmembrane region" description="Helical" evidence="1">
    <location>
        <begin position="134"/>
        <end position="155"/>
    </location>
</feature>
<feature type="transmembrane region" description="Helical" evidence="1">
    <location>
        <begin position="178"/>
        <end position="200"/>
    </location>
</feature>
<feature type="transmembrane region" description="Helical" evidence="1">
    <location>
        <begin position="255"/>
        <end position="275"/>
    </location>
</feature>
<feature type="transmembrane region" description="Helical" evidence="1">
    <location>
        <begin position="291"/>
        <end position="312"/>
    </location>
</feature>
<feature type="transmembrane region" description="Helical" evidence="1">
    <location>
        <begin position="447"/>
        <end position="471"/>
    </location>
</feature>
<feature type="binding site" evidence="1">
    <location>
        <position position="367"/>
    </location>
    <ligand>
        <name>[CaMn4O5] cluster</name>
        <dbReference type="ChEBI" id="CHEBI:189552"/>
    </ligand>
</feature>
<feature type="modified residue" description="N-acetylthreonine" evidence="1">
    <location>
        <position position="15"/>
    </location>
</feature>
<feature type="modified residue" description="Phosphothreonine" evidence="1">
    <location>
        <position position="15"/>
    </location>
</feature>
<dbReference type="EMBL" id="EF489041">
    <property type="protein sequence ID" value="ABO36699.1"/>
    <property type="molecule type" value="Genomic_DNA"/>
</dbReference>
<dbReference type="RefSeq" id="YP_001109496.1">
    <property type="nucleotide sequence ID" value="NC_009143.1"/>
</dbReference>
<dbReference type="SMR" id="A4GYQ5"/>
<dbReference type="FunCoup" id="A4GYQ5">
    <property type="interactions" value="469"/>
</dbReference>
<dbReference type="STRING" id="3694.A4GYQ5"/>
<dbReference type="EnsemblPlants" id="Potri.013G142760.2.v4.1">
    <property type="protein sequence ID" value="Potri.013G142760.2.v4.1"/>
    <property type="gene ID" value="Potri.013G142760.v4.1"/>
</dbReference>
<dbReference type="GeneID" id="4929655"/>
<dbReference type="Gramene" id="Potri.013G142760.2.v4.1">
    <property type="protein sequence ID" value="Potri.013G142760.2.v4.1"/>
    <property type="gene ID" value="Potri.013G142760.v4.1"/>
</dbReference>
<dbReference type="KEGG" id="pop:4929655"/>
<dbReference type="InParanoid" id="A4GYQ5"/>
<dbReference type="OrthoDB" id="815545at2759"/>
<dbReference type="Proteomes" id="UP000006729">
    <property type="component" value="Chloroplast"/>
</dbReference>
<dbReference type="ExpressionAtlas" id="A4GYQ5">
    <property type="expression patterns" value="baseline"/>
</dbReference>
<dbReference type="GO" id="GO:0009535">
    <property type="term" value="C:chloroplast thylakoid membrane"/>
    <property type="evidence" value="ECO:0007669"/>
    <property type="project" value="UniProtKB-SubCell"/>
</dbReference>
<dbReference type="GO" id="GO:0009523">
    <property type="term" value="C:photosystem II"/>
    <property type="evidence" value="ECO:0007669"/>
    <property type="project" value="UniProtKB-KW"/>
</dbReference>
<dbReference type="GO" id="GO:0016168">
    <property type="term" value="F:chlorophyll binding"/>
    <property type="evidence" value="ECO:0007669"/>
    <property type="project" value="UniProtKB-UniRule"/>
</dbReference>
<dbReference type="GO" id="GO:0045156">
    <property type="term" value="F:electron transporter, transferring electrons within the cyclic electron transport pathway of photosynthesis activity"/>
    <property type="evidence" value="ECO:0007669"/>
    <property type="project" value="InterPro"/>
</dbReference>
<dbReference type="GO" id="GO:0046872">
    <property type="term" value="F:metal ion binding"/>
    <property type="evidence" value="ECO:0007669"/>
    <property type="project" value="UniProtKB-KW"/>
</dbReference>
<dbReference type="GO" id="GO:0009772">
    <property type="term" value="P:photosynthetic electron transport in photosystem II"/>
    <property type="evidence" value="ECO:0007669"/>
    <property type="project" value="InterPro"/>
</dbReference>
<dbReference type="FunFam" id="1.10.10.670:FF:000001">
    <property type="entry name" value="Photosystem II CP43 reaction center protein"/>
    <property type="match status" value="1"/>
</dbReference>
<dbReference type="Gene3D" id="1.10.10.670">
    <property type="entry name" value="photosystem ii from thermosynechococcus elongatus"/>
    <property type="match status" value="1"/>
</dbReference>
<dbReference type="HAMAP" id="MF_01496">
    <property type="entry name" value="PSII_PsbC_CP43"/>
    <property type="match status" value="1"/>
</dbReference>
<dbReference type="InterPro" id="IPR000932">
    <property type="entry name" value="PS_antenna-like"/>
</dbReference>
<dbReference type="InterPro" id="IPR036001">
    <property type="entry name" value="PS_II_antenna-like_sf"/>
</dbReference>
<dbReference type="InterPro" id="IPR005869">
    <property type="entry name" value="PSII_PsbC"/>
</dbReference>
<dbReference type="InterPro" id="IPR044900">
    <property type="entry name" value="PSII_PsbC_sf"/>
</dbReference>
<dbReference type="NCBIfam" id="TIGR01153">
    <property type="entry name" value="psbC"/>
    <property type="match status" value="1"/>
</dbReference>
<dbReference type="Pfam" id="PF00421">
    <property type="entry name" value="PSII"/>
    <property type="match status" value="1"/>
</dbReference>
<dbReference type="SUPFAM" id="SSF161077">
    <property type="entry name" value="Photosystem II antenna protein-like"/>
    <property type="match status" value="1"/>
</dbReference>
<reference key="1">
    <citation type="journal article" date="2006" name="Science">
        <title>The genome of black cottonwood, Populus trichocarpa (Torr. &amp; Gray).</title>
        <authorList>
            <person name="Tuskan G.A."/>
            <person name="Difazio S."/>
            <person name="Jansson S."/>
            <person name="Bohlmann J."/>
            <person name="Grigoriev I."/>
            <person name="Hellsten U."/>
            <person name="Putnam N."/>
            <person name="Ralph S."/>
            <person name="Rombauts S."/>
            <person name="Salamov A."/>
            <person name="Schein J."/>
            <person name="Sterck L."/>
            <person name="Aerts A."/>
            <person name="Bhalerao R.R."/>
            <person name="Bhalerao R.P."/>
            <person name="Blaudez D."/>
            <person name="Boerjan W."/>
            <person name="Brun A."/>
            <person name="Brunner A."/>
            <person name="Busov V."/>
            <person name="Campbell M."/>
            <person name="Carlson J."/>
            <person name="Chalot M."/>
            <person name="Chapman J."/>
            <person name="Chen G.-L."/>
            <person name="Cooper D."/>
            <person name="Coutinho P.M."/>
            <person name="Couturier J."/>
            <person name="Covert S."/>
            <person name="Cronk Q."/>
            <person name="Cunningham R."/>
            <person name="Davis J."/>
            <person name="Degroeve S."/>
            <person name="Dejardin A."/>
            <person name="dePamphilis C.W."/>
            <person name="Detter J."/>
            <person name="Dirks B."/>
            <person name="Dubchak I."/>
            <person name="Duplessis S."/>
            <person name="Ehlting J."/>
            <person name="Ellis B."/>
            <person name="Gendler K."/>
            <person name="Goodstein D."/>
            <person name="Gribskov M."/>
            <person name="Grimwood J."/>
            <person name="Groover A."/>
            <person name="Gunter L."/>
            <person name="Hamberger B."/>
            <person name="Heinze B."/>
            <person name="Helariutta Y."/>
            <person name="Henrissat B."/>
            <person name="Holligan D."/>
            <person name="Holt R."/>
            <person name="Huang W."/>
            <person name="Islam-Faridi N."/>
            <person name="Jones S."/>
            <person name="Jones-Rhoades M."/>
            <person name="Jorgensen R."/>
            <person name="Joshi C."/>
            <person name="Kangasjaervi J."/>
            <person name="Karlsson J."/>
            <person name="Kelleher C."/>
            <person name="Kirkpatrick R."/>
            <person name="Kirst M."/>
            <person name="Kohler A."/>
            <person name="Kalluri U."/>
            <person name="Larimer F."/>
            <person name="Leebens-Mack J."/>
            <person name="Leple J.-C."/>
            <person name="Locascio P."/>
            <person name="Lou Y."/>
            <person name="Lucas S."/>
            <person name="Martin F."/>
            <person name="Montanini B."/>
            <person name="Napoli C."/>
            <person name="Nelson D.R."/>
            <person name="Nelson C."/>
            <person name="Nieminen K."/>
            <person name="Nilsson O."/>
            <person name="Pereda V."/>
            <person name="Peter G."/>
            <person name="Philippe R."/>
            <person name="Pilate G."/>
            <person name="Poliakov A."/>
            <person name="Razumovskaya J."/>
            <person name="Richardson P."/>
            <person name="Rinaldi C."/>
            <person name="Ritland K."/>
            <person name="Rouze P."/>
            <person name="Ryaboy D."/>
            <person name="Schmutz J."/>
            <person name="Schrader J."/>
            <person name="Segerman B."/>
            <person name="Shin H."/>
            <person name="Siddiqui A."/>
            <person name="Sterky F."/>
            <person name="Terry A."/>
            <person name="Tsai C.-J."/>
            <person name="Uberbacher E."/>
            <person name="Unneberg P."/>
            <person name="Vahala J."/>
            <person name="Wall K."/>
            <person name="Wessler S."/>
            <person name="Yang G."/>
            <person name="Yin T."/>
            <person name="Douglas C."/>
            <person name="Marra M."/>
            <person name="Sandberg G."/>
            <person name="Van de Peer Y."/>
            <person name="Rokhsar D.S."/>
        </authorList>
    </citation>
    <scope>NUCLEOTIDE SEQUENCE [LARGE SCALE GENOMIC DNA]</scope>
    <source>
        <strain>cv. Nisqually</strain>
    </source>
</reference>
<comment type="function">
    <text evidence="1">One of the components of the core complex of photosystem II (PSII). It binds chlorophyll and helps catalyze the primary light-induced photochemical processes of PSII. PSII is a light-driven water:plastoquinone oxidoreductase, using light energy to abstract electrons from H(2)O, generating O(2) and a proton gradient subsequently used for ATP formation.</text>
</comment>
<comment type="cofactor">
    <text evidence="1">Binds multiple chlorophylls and provides some of the ligands for the Ca-4Mn-5O cluster of the oxygen-evolving complex. It may also provide a ligand for a Cl- that is required for oxygen evolution. PSII binds additional chlorophylls, carotenoids and specific lipids.</text>
</comment>
<comment type="subunit">
    <text evidence="1">PSII is composed of 1 copy each of membrane proteins PsbA, PsbB, PsbC, PsbD, PsbE, PsbF, PsbH, PsbI, PsbJ, PsbK, PsbL, PsbM, PsbT, PsbX, PsbY, PsbZ, Psb30/Ycf12, at least 3 peripheral proteins of the oxygen-evolving complex and a large number of cofactors. It forms dimeric complexes.</text>
</comment>
<comment type="subcellular location">
    <subcellularLocation>
        <location evidence="1">Plastid</location>
        <location evidence="1">Chloroplast thylakoid membrane</location>
        <topology evidence="1">Multi-pass membrane protein</topology>
    </subcellularLocation>
</comment>
<comment type="similarity">
    <text evidence="1">Belongs to the PsbB/PsbC family. PsbC subfamily.</text>
</comment>
<gene>
    <name evidence="1" type="primary">psbC</name>
    <name type="ordered locus">Poptr_cp017</name>
</gene>
<accession>A4GYQ5</accession>
<name>PSBC_POPTR</name>
<keyword id="KW-0007">Acetylation</keyword>
<keyword id="KW-0148">Chlorophyll</keyword>
<keyword id="KW-0150">Chloroplast</keyword>
<keyword id="KW-0157">Chromophore</keyword>
<keyword id="KW-0464">Manganese</keyword>
<keyword id="KW-0472">Membrane</keyword>
<keyword id="KW-0479">Metal-binding</keyword>
<keyword id="KW-0597">Phosphoprotein</keyword>
<keyword id="KW-0602">Photosynthesis</keyword>
<keyword id="KW-0604">Photosystem II</keyword>
<keyword id="KW-0934">Plastid</keyword>
<keyword id="KW-1185">Reference proteome</keyword>
<keyword id="KW-0793">Thylakoid</keyword>
<keyword id="KW-0812">Transmembrane</keyword>
<keyword id="KW-1133">Transmembrane helix</keyword>
<organism>
    <name type="scientific">Populus trichocarpa</name>
    <name type="common">Western balsam poplar</name>
    <name type="synonym">Populus balsamifera subsp. trichocarpa</name>
    <dbReference type="NCBI Taxonomy" id="3694"/>
    <lineage>
        <taxon>Eukaryota</taxon>
        <taxon>Viridiplantae</taxon>
        <taxon>Streptophyta</taxon>
        <taxon>Embryophyta</taxon>
        <taxon>Tracheophyta</taxon>
        <taxon>Spermatophyta</taxon>
        <taxon>Magnoliopsida</taxon>
        <taxon>eudicotyledons</taxon>
        <taxon>Gunneridae</taxon>
        <taxon>Pentapetalae</taxon>
        <taxon>rosids</taxon>
        <taxon>fabids</taxon>
        <taxon>Malpighiales</taxon>
        <taxon>Salicaceae</taxon>
        <taxon>Saliceae</taxon>
        <taxon>Populus</taxon>
    </lineage>
</organism>
<evidence type="ECO:0000255" key="1">
    <source>
        <dbReference type="HAMAP-Rule" id="MF_01496"/>
    </source>
</evidence>
<geneLocation type="chloroplast"/>
<protein>
    <recommendedName>
        <fullName evidence="1">Photosystem II CP43 reaction center protein</fullName>
    </recommendedName>
    <alternativeName>
        <fullName evidence="1">PSII 43 kDa protein</fullName>
    </alternativeName>
    <alternativeName>
        <fullName evidence="1">Protein CP-43</fullName>
    </alternativeName>
</protein>
<proteinExistence type="inferred from homology"/>
<sequence>MKTLYSLRRFYPVETLFNGTLALAGRDQETTGFAWWAGNARLINLSGKLLGAHVAHAGLIVFWAGAMNLFEVAHFVPEKPMYEQGLILLPHLATLGWGVGPGGEVIDTFPYFVSGVLHLISSAVLGFGGIYHALLGPETLEESFPFFGYVWKDRNKMTTILGIHLILLGIGAFLLVFKALYFGGVYDTWAPGGGDVRKITNLTLSPSVIFGYLLKSPFGGEGWIVSVDDLEDIIGGHVWLGSICILGGIWHILTKPFAWARRALVWSGEAYLSYSLGALAVFGFIACCFVWFNNTAYPSEFYGPTGPEASQAQAFTFLVRDQRLGANVGSAQGPTGLGKYLMRSPTGEVIFGGETMRFWDLRAPWLEPLRGPNGLDLSRLKKDIQPWQERRSAEYMTHAPLGSLNSVGGVATEINAVNYVSPRSWLATSHFVLGFFLFVGHLWHAGRARAAAAGFEKGIDRDFEPVLSMTPLN</sequence>